<organism>
    <name type="scientific">Perilla frutescens</name>
    <name type="common">Beefsteak mint</name>
    <name type="synonym">Perilla ocymoides</name>
    <dbReference type="NCBI Taxonomy" id="48386"/>
    <lineage>
        <taxon>Eukaryota</taxon>
        <taxon>Viridiplantae</taxon>
        <taxon>Streptophyta</taxon>
        <taxon>Embryophyta</taxon>
        <taxon>Tracheophyta</taxon>
        <taxon>Spermatophyta</taxon>
        <taxon>Magnoliopsida</taxon>
        <taxon>eudicotyledons</taxon>
        <taxon>Gunneridae</taxon>
        <taxon>Pentapetalae</taxon>
        <taxon>asterids</taxon>
        <taxon>lamiids</taxon>
        <taxon>Lamiales</taxon>
        <taxon>Lamiaceae</taxon>
        <taxon>Nepetoideae</taxon>
        <taxon>Elsholtzieae</taxon>
        <taxon>Perilla</taxon>
    </lineage>
</organism>
<comment type="similarity">
    <text evidence="1">Belongs to the eukaryotic ribosomal protein eL31 family.</text>
</comment>
<protein>
    <recommendedName>
        <fullName evidence="1">Large ribosomal subunit protein eL31</fullName>
    </recommendedName>
    <alternativeName>
        <fullName>60S ribosomal protein L31</fullName>
    </alternativeName>
</protein>
<keyword id="KW-0687">Ribonucleoprotein</keyword>
<keyword id="KW-0689">Ribosomal protein</keyword>
<name>RL31_PERFR</name>
<accession>Q9M573</accession>
<reference key="1">
    <citation type="submission" date="2000-02" db="EMBL/GenBank/DDBJ databases">
        <title>Isolation of 80S ribosomal protein L31 from Perilla frutescens.</title>
        <authorList>
            <person name="Hwang S."/>
            <person name="Hwang Y."/>
        </authorList>
    </citation>
    <scope>NUCLEOTIDE SEQUENCE [MRNA]</scope>
    <source>
        <strain>cv. Okdong</strain>
    </source>
</reference>
<proteinExistence type="evidence at transcript level"/>
<dbReference type="EMBL" id="AF237624">
    <property type="protein sequence ID" value="AAF42953.1"/>
    <property type="molecule type" value="mRNA"/>
</dbReference>
<dbReference type="SMR" id="Q9M573"/>
<dbReference type="GO" id="GO:0022625">
    <property type="term" value="C:cytosolic large ribosomal subunit"/>
    <property type="evidence" value="ECO:0007669"/>
    <property type="project" value="TreeGrafter"/>
</dbReference>
<dbReference type="GO" id="GO:0003735">
    <property type="term" value="F:structural constituent of ribosome"/>
    <property type="evidence" value="ECO:0007669"/>
    <property type="project" value="InterPro"/>
</dbReference>
<dbReference type="GO" id="GO:0002181">
    <property type="term" value="P:cytoplasmic translation"/>
    <property type="evidence" value="ECO:0007669"/>
    <property type="project" value="TreeGrafter"/>
</dbReference>
<dbReference type="CDD" id="cd00463">
    <property type="entry name" value="Ribosomal_L31e"/>
    <property type="match status" value="1"/>
</dbReference>
<dbReference type="FunFam" id="3.10.440.10:FF:000001">
    <property type="entry name" value="60S ribosomal protein L31"/>
    <property type="match status" value="1"/>
</dbReference>
<dbReference type="Gene3D" id="3.10.440.10">
    <property type="match status" value="1"/>
</dbReference>
<dbReference type="InterPro" id="IPR000054">
    <property type="entry name" value="Ribosomal_eL31"/>
</dbReference>
<dbReference type="InterPro" id="IPR020052">
    <property type="entry name" value="Ribosomal_eL31_CS"/>
</dbReference>
<dbReference type="InterPro" id="IPR023621">
    <property type="entry name" value="Ribosomal_eL31_dom_sf"/>
</dbReference>
<dbReference type="NCBIfam" id="NF002258">
    <property type="entry name" value="PRK01192.1-1"/>
    <property type="match status" value="1"/>
</dbReference>
<dbReference type="PANTHER" id="PTHR10956">
    <property type="entry name" value="60S RIBOSOMAL PROTEIN L31"/>
    <property type="match status" value="1"/>
</dbReference>
<dbReference type="PANTHER" id="PTHR10956:SF0">
    <property type="entry name" value="60S RIBOSOMAL PROTEIN L31"/>
    <property type="match status" value="1"/>
</dbReference>
<dbReference type="Pfam" id="PF01198">
    <property type="entry name" value="Ribosomal_L31e"/>
    <property type="match status" value="1"/>
</dbReference>
<dbReference type="SMART" id="SM01380">
    <property type="entry name" value="Ribosomal_L31e"/>
    <property type="match status" value="1"/>
</dbReference>
<dbReference type="SUPFAM" id="SSF54575">
    <property type="entry name" value="Ribosomal protein L31e"/>
    <property type="match status" value="1"/>
</dbReference>
<dbReference type="PROSITE" id="PS01144">
    <property type="entry name" value="RIBOSOMAL_L31E"/>
    <property type="match status" value="1"/>
</dbReference>
<feature type="chain" id="PRO_0000153782" description="Large ribosomal subunit protein eL31">
    <location>
        <begin position="1"/>
        <end position="121"/>
    </location>
</feature>
<evidence type="ECO:0000305" key="1"/>
<sequence>MADKGSKPRKEEVVSREYTINLHKRLHGCTFKKKAPKAIKEIRKFAQKAMGTTDVRVDVKLNKHIWSRGIRSVPRRIRVRIARKRNDDEDAKEELYSLVTVAEIPEGGLKGLGTQVIDEEE</sequence>
<gene>
    <name type="primary">RPL31</name>
</gene>